<feature type="chain" id="PRO_0000160463" description="ATP-dependent Clp protease ATP-binding subunit ClpX">
    <location>
        <begin position="1"/>
        <end position="423"/>
    </location>
</feature>
<feature type="domain" description="ClpX-type ZB" evidence="2">
    <location>
        <begin position="2"/>
        <end position="56"/>
    </location>
</feature>
<feature type="binding site" evidence="2">
    <location>
        <position position="15"/>
    </location>
    <ligand>
        <name>Zn(2+)</name>
        <dbReference type="ChEBI" id="CHEBI:29105"/>
    </ligand>
</feature>
<feature type="binding site" evidence="2">
    <location>
        <position position="18"/>
    </location>
    <ligand>
        <name>Zn(2+)</name>
        <dbReference type="ChEBI" id="CHEBI:29105"/>
    </ligand>
</feature>
<feature type="binding site" evidence="2">
    <location>
        <position position="37"/>
    </location>
    <ligand>
        <name>Zn(2+)</name>
        <dbReference type="ChEBI" id="CHEBI:29105"/>
    </ligand>
</feature>
<feature type="binding site" evidence="2">
    <location>
        <position position="40"/>
    </location>
    <ligand>
        <name>Zn(2+)</name>
        <dbReference type="ChEBI" id="CHEBI:29105"/>
    </ligand>
</feature>
<feature type="binding site" evidence="1">
    <location>
        <begin position="120"/>
        <end position="127"/>
    </location>
    <ligand>
        <name>ATP</name>
        <dbReference type="ChEBI" id="CHEBI:30616"/>
    </ligand>
</feature>
<proteinExistence type="inferred from homology"/>
<accession>O33873</accession>
<reference key="1">
    <citation type="journal article" date="1997" name="Mol. Microbiol.">
        <title>The ClpP protein, a subunit of the Clp protease, modulates ail gene expression in Yersinia enterocolitica.</title>
        <authorList>
            <person name="Pederson K.J."/>
            <person name="Carlson S."/>
            <person name="Pierson D.E."/>
        </authorList>
    </citation>
    <scope>NUCLEOTIDE SEQUENCE [GENOMIC DNA]</scope>
    <source>
        <strain>8081C / Serotype O:8</strain>
    </source>
</reference>
<gene>
    <name evidence="1" type="primary">clpX</name>
</gene>
<sequence>MTDKRKDGSGKLLYCSFCGKSQHEVRKLIAGPSVYICDECVDLCNDIIREEIKEVAPHRERSSLPTPHEIRRHLDDYVIGQEPAKKVLAVAVYNHYKRLRNGDTSNGIELGKSNILLIGPTGSGKTLLAETLARFLDVPFTMADATTLTEAGYVGEDVENIIQKLLQKCDYDVQKAQRGIVYIDEIDKISRKSDNPSITRDVSGEGVQQALLKLIEGTIAAVPPQGGRKHPQQEFLQVDTSKILFICGGAFAGLDKVIGQRINTGSGIGFGATVKGKSEKATEGELLRQAEPEDLIKFGLIPEFIGRLPVVATLSELSEDALIQILKEPKNALTKQYQALFNLEGVELEFRDEALTAIAKKAMARKTGARGLRSIVEGALLDTMYDLPSMESVEKVVVDESVIAGQSAPMLIYGQPEAQASGE</sequence>
<name>CLPX_YEREN</name>
<comment type="function">
    <text evidence="1">ATP-dependent specificity component of the Clp protease. It directs the protease to specific substrates. Can perform chaperone functions in the absence of ClpP.</text>
</comment>
<comment type="subunit">
    <text evidence="1">Component of the ClpX-ClpP complex. Forms a hexameric ring that, in the presence of ATP, binds to fourteen ClpP subunits assembled into a disk-like structure with a central cavity, resembling the structure of eukaryotic proteasomes.</text>
</comment>
<comment type="similarity">
    <text evidence="1">Belongs to the ClpX chaperone family.</text>
</comment>
<organism>
    <name type="scientific">Yersinia enterocolitica</name>
    <dbReference type="NCBI Taxonomy" id="630"/>
    <lineage>
        <taxon>Bacteria</taxon>
        <taxon>Pseudomonadati</taxon>
        <taxon>Pseudomonadota</taxon>
        <taxon>Gammaproteobacteria</taxon>
        <taxon>Enterobacterales</taxon>
        <taxon>Yersiniaceae</taxon>
        <taxon>Yersinia</taxon>
    </lineage>
</organism>
<protein>
    <recommendedName>
        <fullName evidence="1">ATP-dependent Clp protease ATP-binding subunit ClpX</fullName>
    </recommendedName>
</protein>
<evidence type="ECO:0000255" key="1">
    <source>
        <dbReference type="HAMAP-Rule" id="MF_00175"/>
    </source>
</evidence>
<evidence type="ECO:0000255" key="2">
    <source>
        <dbReference type="PROSITE-ProRule" id="PRU01250"/>
    </source>
</evidence>
<keyword id="KW-0067">ATP-binding</keyword>
<keyword id="KW-0143">Chaperone</keyword>
<keyword id="KW-0479">Metal-binding</keyword>
<keyword id="KW-0547">Nucleotide-binding</keyword>
<keyword id="KW-0862">Zinc</keyword>
<dbReference type="EMBL" id="U66330">
    <property type="protein sequence ID" value="AAC45783.1"/>
    <property type="molecule type" value="Genomic_DNA"/>
</dbReference>
<dbReference type="RefSeq" id="WP_005167638.1">
    <property type="nucleotide sequence ID" value="NZ_NWMR01000009.1"/>
</dbReference>
<dbReference type="SMR" id="O33873"/>
<dbReference type="STRING" id="1443113.LC20_01388"/>
<dbReference type="KEGG" id="yew:CH47_2509"/>
<dbReference type="eggNOG" id="COG1219">
    <property type="taxonomic scope" value="Bacteria"/>
</dbReference>
<dbReference type="GO" id="GO:0009376">
    <property type="term" value="C:HslUV protease complex"/>
    <property type="evidence" value="ECO:0007669"/>
    <property type="project" value="TreeGrafter"/>
</dbReference>
<dbReference type="GO" id="GO:0005524">
    <property type="term" value="F:ATP binding"/>
    <property type="evidence" value="ECO:0007669"/>
    <property type="project" value="UniProtKB-UniRule"/>
</dbReference>
<dbReference type="GO" id="GO:0016887">
    <property type="term" value="F:ATP hydrolysis activity"/>
    <property type="evidence" value="ECO:0007669"/>
    <property type="project" value="InterPro"/>
</dbReference>
<dbReference type="GO" id="GO:0140662">
    <property type="term" value="F:ATP-dependent protein folding chaperone"/>
    <property type="evidence" value="ECO:0007669"/>
    <property type="project" value="InterPro"/>
</dbReference>
<dbReference type="GO" id="GO:0046983">
    <property type="term" value="F:protein dimerization activity"/>
    <property type="evidence" value="ECO:0007669"/>
    <property type="project" value="InterPro"/>
</dbReference>
<dbReference type="GO" id="GO:0051082">
    <property type="term" value="F:unfolded protein binding"/>
    <property type="evidence" value="ECO:0007669"/>
    <property type="project" value="UniProtKB-UniRule"/>
</dbReference>
<dbReference type="GO" id="GO:0008270">
    <property type="term" value="F:zinc ion binding"/>
    <property type="evidence" value="ECO:0007669"/>
    <property type="project" value="InterPro"/>
</dbReference>
<dbReference type="GO" id="GO:0051301">
    <property type="term" value="P:cell division"/>
    <property type="evidence" value="ECO:0007669"/>
    <property type="project" value="TreeGrafter"/>
</dbReference>
<dbReference type="GO" id="GO:0051603">
    <property type="term" value="P:proteolysis involved in protein catabolic process"/>
    <property type="evidence" value="ECO:0007669"/>
    <property type="project" value="TreeGrafter"/>
</dbReference>
<dbReference type="CDD" id="cd19497">
    <property type="entry name" value="RecA-like_ClpX"/>
    <property type="match status" value="1"/>
</dbReference>
<dbReference type="FunFam" id="1.10.8.60:FF:000002">
    <property type="entry name" value="ATP-dependent Clp protease ATP-binding subunit ClpX"/>
    <property type="match status" value="1"/>
</dbReference>
<dbReference type="FunFam" id="3.40.50.300:FF:000005">
    <property type="entry name" value="ATP-dependent Clp protease ATP-binding subunit ClpX"/>
    <property type="match status" value="1"/>
</dbReference>
<dbReference type="Gene3D" id="1.10.8.60">
    <property type="match status" value="1"/>
</dbReference>
<dbReference type="Gene3D" id="6.20.220.10">
    <property type="entry name" value="ClpX chaperone, C4-type zinc finger domain"/>
    <property type="match status" value="1"/>
</dbReference>
<dbReference type="Gene3D" id="3.40.50.300">
    <property type="entry name" value="P-loop containing nucleotide triphosphate hydrolases"/>
    <property type="match status" value="1"/>
</dbReference>
<dbReference type="HAMAP" id="MF_00175">
    <property type="entry name" value="ClpX"/>
    <property type="match status" value="1"/>
</dbReference>
<dbReference type="InterPro" id="IPR003593">
    <property type="entry name" value="AAA+_ATPase"/>
</dbReference>
<dbReference type="InterPro" id="IPR050052">
    <property type="entry name" value="ATP-dep_Clp_protease_ClpX"/>
</dbReference>
<dbReference type="InterPro" id="IPR003959">
    <property type="entry name" value="ATPase_AAA_core"/>
</dbReference>
<dbReference type="InterPro" id="IPR019489">
    <property type="entry name" value="Clp_ATPase_C"/>
</dbReference>
<dbReference type="InterPro" id="IPR004487">
    <property type="entry name" value="Clp_protease_ATP-bd_su_ClpX"/>
</dbReference>
<dbReference type="InterPro" id="IPR046425">
    <property type="entry name" value="ClpX_bact"/>
</dbReference>
<dbReference type="InterPro" id="IPR027417">
    <property type="entry name" value="P-loop_NTPase"/>
</dbReference>
<dbReference type="InterPro" id="IPR010603">
    <property type="entry name" value="Znf_CppX_C4"/>
</dbReference>
<dbReference type="InterPro" id="IPR038366">
    <property type="entry name" value="Znf_CppX_C4_sf"/>
</dbReference>
<dbReference type="NCBIfam" id="TIGR00382">
    <property type="entry name" value="clpX"/>
    <property type="match status" value="1"/>
</dbReference>
<dbReference type="NCBIfam" id="NF003745">
    <property type="entry name" value="PRK05342.1"/>
    <property type="match status" value="1"/>
</dbReference>
<dbReference type="PANTHER" id="PTHR48102:SF7">
    <property type="entry name" value="ATP-DEPENDENT CLP PROTEASE ATP-BINDING SUBUNIT CLPX-LIKE, MITOCHONDRIAL"/>
    <property type="match status" value="1"/>
</dbReference>
<dbReference type="PANTHER" id="PTHR48102">
    <property type="entry name" value="ATP-DEPENDENT CLP PROTEASE ATP-BINDING SUBUNIT CLPX-LIKE, MITOCHONDRIAL-RELATED"/>
    <property type="match status" value="1"/>
</dbReference>
<dbReference type="Pfam" id="PF07724">
    <property type="entry name" value="AAA_2"/>
    <property type="match status" value="1"/>
</dbReference>
<dbReference type="Pfam" id="PF10431">
    <property type="entry name" value="ClpB_D2-small"/>
    <property type="match status" value="1"/>
</dbReference>
<dbReference type="Pfam" id="PF06689">
    <property type="entry name" value="zf-C4_ClpX"/>
    <property type="match status" value="1"/>
</dbReference>
<dbReference type="SMART" id="SM00382">
    <property type="entry name" value="AAA"/>
    <property type="match status" value="1"/>
</dbReference>
<dbReference type="SMART" id="SM01086">
    <property type="entry name" value="ClpB_D2-small"/>
    <property type="match status" value="1"/>
</dbReference>
<dbReference type="SMART" id="SM00994">
    <property type="entry name" value="zf-C4_ClpX"/>
    <property type="match status" value="1"/>
</dbReference>
<dbReference type="SUPFAM" id="SSF57716">
    <property type="entry name" value="Glucocorticoid receptor-like (DNA-binding domain)"/>
    <property type="match status" value="1"/>
</dbReference>
<dbReference type="SUPFAM" id="SSF52540">
    <property type="entry name" value="P-loop containing nucleoside triphosphate hydrolases"/>
    <property type="match status" value="1"/>
</dbReference>
<dbReference type="PROSITE" id="PS51902">
    <property type="entry name" value="CLPX_ZB"/>
    <property type="match status" value="1"/>
</dbReference>